<gene>
    <name evidence="1" type="primary">lysS</name>
    <name type="ordered locus">Rleg2_3420</name>
</gene>
<dbReference type="EC" id="6.1.1.6" evidence="1"/>
<dbReference type="EMBL" id="CP001191">
    <property type="protein sequence ID" value="ACI56687.1"/>
    <property type="molecule type" value="Genomic_DNA"/>
</dbReference>
<dbReference type="RefSeq" id="WP_012559002.1">
    <property type="nucleotide sequence ID" value="NC_011369.1"/>
</dbReference>
<dbReference type="SMR" id="B5ZQW5"/>
<dbReference type="STRING" id="395492.Rleg2_3420"/>
<dbReference type="KEGG" id="rlt:Rleg2_3420"/>
<dbReference type="eggNOG" id="COG1190">
    <property type="taxonomic scope" value="Bacteria"/>
</dbReference>
<dbReference type="HOGENOM" id="CLU_008255_6_0_5"/>
<dbReference type="Proteomes" id="UP000008330">
    <property type="component" value="Chromosome"/>
</dbReference>
<dbReference type="GO" id="GO:0005829">
    <property type="term" value="C:cytosol"/>
    <property type="evidence" value="ECO:0007669"/>
    <property type="project" value="TreeGrafter"/>
</dbReference>
<dbReference type="GO" id="GO:0005524">
    <property type="term" value="F:ATP binding"/>
    <property type="evidence" value="ECO:0007669"/>
    <property type="project" value="UniProtKB-UniRule"/>
</dbReference>
<dbReference type="GO" id="GO:0004824">
    <property type="term" value="F:lysine-tRNA ligase activity"/>
    <property type="evidence" value="ECO:0007669"/>
    <property type="project" value="UniProtKB-UniRule"/>
</dbReference>
<dbReference type="GO" id="GO:0000287">
    <property type="term" value="F:magnesium ion binding"/>
    <property type="evidence" value="ECO:0007669"/>
    <property type="project" value="UniProtKB-UniRule"/>
</dbReference>
<dbReference type="GO" id="GO:0000049">
    <property type="term" value="F:tRNA binding"/>
    <property type="evidence" value="ECO:0007669"/>
    <property type="project" value="TreeGrafter"/>
</dbReference>
<dbReference type="GO" id="GO:0006430">
    <property type="term" value="P:lysyl-tRNA aminoacylation"/>
    <property type="evidence" value="ECO:0007669"/>
    <property type="project" value="UniProtKB-UniRule"/>
</dbReference>
<dbReference type="CDD" id="cd00775">
    <property type="entry name" value="LysRS_core"/>
    <property type="match status" value="1"/>
</dbReference>
<dbReference type="CDD" id="cd04322">
    <property type="entry name" value="LysRS_N"/>
    <property type="match status" value="1"/>
</dbReference>
<dbReference type="Gene3D" id="3.30.930.10">
    <property type="entry name" value="Bira Bifunctional Protein, Domain 2"/>
    <property type="match status" value="1"/>
</dbReference>
<dbReference type="Gene3D" id="2.40.50.140">
    <property type="entry name" value="Nucleic acid-binding proteins"/>
    <property type="match status" value="1"/>
</dbReference>
<dbReference type="HAMAP" id="MF_00252">
    <property type="entry name" value="Lys_tRNA_synth_class2"/>
    <property type="match status" value="1"/>
</dbReference>
<dbReference type="InterPro" id="IPR004364">
    <property type="entry name" value="Aa-tRNA-synt_II"/>
</dbReference>
<dbReference type="InterPro" id="IPR006195">
    <property type="entry name" value="aa-tRNA-synth_II"/>
</dbReference>
<dbReference type="InterPro" id="IPR045864">
    <property type="entry name" value="aa-tRNA-synth_II/BPL/LPL"/>
</dbReference>
<dbReference type="InterPro" id="IPR002313">
    <property type="entry name" value="Lys-tRNA-ligase_II"/>
</dbReference>
<dbReference type="InterPro" id="IPR044136">
    <property type="entry name" value="Lys-tRNA-ligase_II_N"/>
</dbReference>
<dbReference type="InterPro" id="IPR018149">
    <property type="entry name" value="Lys-tRNA-synth_II_C"/>
</dbReference>
<dbReference type="InterPro" id="IPR012340">
    <property type="entry name" value="NA-bd_OB-fold"/>
</dbReference>
<dbReference type="InterPro" id="IPR004365">
    <property type="entry name" value="NA-bd_OB_tRNA"/>
</dbReference>
<dbReference type="NCBIfam" id="TIGR00499">
    <property type="entry name" value="lysS_bact"/>
    <property type="match status" value="1"/>
</dbReference>
<dbReference type="NCBIfam" id="NF001756">
    <property type="entry name" value="PRK00484.1"/>
    <property type="match status" value="1"/>
</dbReference>
<dbReference type="PANTHER" id="PTHR42918:SF15">
    <property type="entry name" value="LYSINE--TRNA LIGASE, CHLOROPLASTIC_MITOCHONDRIAL"/>
    <property type="match status" value="1"/>
</dbReference>
<dbReference type="PANTHER" id="PTHR42918">
    <property type="entry name" value="LYSYL-TRNA SYNTHETASE"/>
    <property type="match status" value="1"/>
</dbReference>
<dbReference type="Pfam" id="PF00152">
    <property type="entry name" value="tRNA-synt_2"/>
    <property type="match status" value="1"/>
</dbReference>
<dbReference type="Pfam" id="PF01336">
    <property type="entry name" value="tRNA_anti-codon"/>
    <property type="match status" value="1"/>
</dbReference>
<dbReference type="PRINTS" id="PR00982">
    <property type="entry name" value="TRNASYNTHLYS"/>
</dbReference>
<dbReference type="SUPFAM" id="SSF55681">
    <property type="entry name" value="Class II aaRS and biotin synthetases"/>
    <property type="match status" value="1"/>
</dbReference>
<dbReference type="SUPFAM" id="SSF50249">
    <property type="entry name" value="Nucleic acid-binding proteins"/>
    <property type="match status" value="1"/>
</dbReference>
<dbReference type="PROSITE" id="PS50862">
    <property type="entry name" value="AA_TRNA_LIGASE_II"/>
    <property type="match status" value="1"/>
</dbReference>
<sequence>MNDKTENTLSSDVTEVRAQKLKLLREQVGDVYPAHFHRTLTNAELGAKYESLESDVETQDVVTVAGRVYSSRNSGMFMDIHDASGKIQIFSHKDTTPEEARALLPMIDIGDIIGVTGIVRRTKRGELTINAQKIEMLTKSLLPMPEKWHGLSDIELRYRKRHLDIMTNEDSKLRFQQRSKIVSGIRRFMENDGFMEVETPMLQSIYGGATAEPFKTHHNTLKLDMYLRIAPELFLKRTLVSGLTDKVFEINRNFRNEGVSTRHNPEFTMMECYWAYADYEDMMDLVERLFETLALSIHGTTEFDFGDKQLSFKGPFKRVPMPDAVKQVTGIDFLAIKTDEEARTAAKAAGFAVEKDWTWGECLAFIFEEKVESTLIQPSHVTHFPKDISPFAKEVPGEPRLVERFETYCNAWELGNAFSELNDPEEQRRRMVEQLEQAHARGEKEKQLDEEFLDAIDQGMPPAGGLGIGVDRLIMLLTNAPSIRDVILFPARRNKAD</sequence>
<organism>
    <name type="scientific">Rhizobium leguminosarum bv. trifolii (strain WSM2304)</name>
    <dbReference type="NCBI Taxonomy" id="395492"/>
    <lineage>
        <taxon>Bacteria</taxon>
        <taxon>Pseudomonadati</taxon>
        <taxon>Pseudomonadota</taxon>
        <taxon>Alphaproteobacteria</taxon>
        <taxon>Hyphomicrobiales</taxon>
        <taxon>Rhizobiaceae</taxon>
        <taxon>Rhizobium/Agrobacterium group</taxon>
        <taxon>Rhizobium</taxon>
    </lineage>
</organism>
<name>SYK_RHILW</name>
<proteinExistence type="inferred from homology"/>
<protein>
    <recommendedName>
        <fullName evidence="1">Lysine--tRNA ligase</fullName>
        <ecNumber evidence="1">6.1.1.6</ecNumber>
    </recommendedName>
    <alternativeName>
        <fullName evidence="1">Lysyl-tRNA synthetase</fullName>
        <shortName evidence="1">LysRS</shortName>
    </alternativeName>
</protein>
<accession>B5ZQW5</accession>
<keyword id="KW-0030">Aminoacyl-tRNA synthetase</keyword>
<keyword id="KW-0067">ATP-binding</keyword>
<keyword id="KW-0963">Cytoplasm</keyword>
<keyword id="KW-0436">Ligase</keyword>
<keyword id="KW-0460">Magnesium</keyword>
<keyword id="KW-0479">Metal-binding</keyword>
<keyword id="KW-0547">Nucleotide-binding</keyword>
<keyword id="KW-0648">Protein biosynthesis</keyword>
<keyword id="KW-1185">Reference proteome</keyword>
<reference key="1">
    <citation type="journal article" date="2010" name="Stand. Genomic Sci.">
        <title>Complete genome sequence of Rhizobium leguminosarum bv trifolii strain WSM2304, an effective microsymbiont of the South American clover Trifolium polymorphum.</title>
        <authorList>
            <person name="Reeve W."/>
            <person name="O'Hara G."/>
            <person name="Chain P."/>
            <person name="Ardley J."/>
            <person name="Brau L."/>
            <person name="Nandesena K."/>
            <person name="Tiwari R."/>
            <person name="Malfatti S."/>
            <person name="Kiss H."/>
            <person name="Lapidus A."/>
            <person name="Copeland A."/>
            <person name="Nolan M."/>
            <person name="Land M."/>
            <person name="Ivanova N."/>
            <person name="Mavromatis K."/>
            <person name="Markowitz V."/>
            <person name="Kyrpides N."/>
            <person name="Melino V."/>
            <person name="Denton M."/>
            <person name="Yates R."/>
            <person name="Howieson J."/>
        </authorList>
    </citation>
    <scope>NUCLEOTIDE SEQUENCE [LARGE SCALE GENOMIC DNA]</scope>
    <source>
        <strain>WSM2304</strain>
    </source>
</reference>
<feature type="chain" id="PRO_1000204572" description="Lysine--tRNA ligase">
    <location>
        <begin position="1"/>
        <end position="497"/>
    </location>
</feature>
<feature type="binding site" evidence="1">
    <location>
        <position position="406"/>
    </location>
    <ligand>
        <name>Mg(2+)</name>
        <dbReference type="ChEBI" id="CHEBI:18420"/>
        <label>1</label>
    </ligand>
</feature>
<feature type="binding site" evidence="1">
    <location>
        <position position="413"/>
    </location>
    <ligand>
        <name>Mg(2+)</name>
        <dbReference type="ChEBI" id="CHEBI:18420"/>
        <label>1</label>
    </ligand>
</feature>
<feature type="binding site" evidence="1">
    <location>
        <position position="413"/>
    </location>
    <ligand>
        <name>Mg(2+)</name>
        <dbReference type="ChEBI" id="CHEBI:18420"/>
        <label>2</label>
    </ligand>
</feature>
<comment type="catalytic activity">
    <reaction evidence="1">
        <text>tRNA(Lys) + L-lysine + ATP = L-lysyl-tRNA(Lys) + AMP + diphosphate</text>
        <dbReference type="Rhea" id="RHEA:20792"/>
        <dbReference type="Rhea" id="RHEA-COMP:9696"/>
        <dbReference type="Rhea" id="RHEA-COMP:9697"/>
        <dbReference type="ChEBI" id="CHEBI:30616"/>
        <dbReference type="ChEBI" id="CHEBI:32551"/>
        <dbReference type="ChEBI" id="CHEBI:33019"/>
        <dbReference type="ChEBI" id="CHEBI:78442"/>
        <dbReference type="ChEBI" id="CHEBI:78529"/>
        <dbReference type="ChEBI" id="CHEBI:456215"/>
        <dbReference type="EC" id="6.1.1.6"/>
    </reaction>
</comment>
<comment type="cofactor">
    <cofactor evidence="1">
        <name>Mg(2+)</name>
        <dbReference type="ChEBI" id="CHEBI:18420"/>
    </cofactor>
    <text evidence="1">Binds 3 Mg(2+) ions per subunit.</text>
</comment>
<comment type="subunit">
    <text evidence="1">Homodimer.</text>
</comment>
<comment type="subcellular location">
    <subcellularLocation>
        <location evidence="1">Cytoplasm</location>
    </subcellularLocation>
</comment>
<comment type="similarity">
    <text evidence="1">Belongs to the class-II aminoacyl-tRNA synthetase family.</text>
</comment>
<evidence type="ECO:0000255" key="1">
    <source>
        <dbReference type="HAMAP-Rule" id="MF_00252"/>
    </source>
</evidence>